<keyword id="KW-0903">Direct protein sequencing</keyword>
<accession>P19986</accession>
<reference key="1">
    <citation type="journal article" date="1989" name="J. Biol. Chem.">
        <title>Purification and characterization of trehalase inhibitor from hemolymph of the American cockroach, Periplaneta americana.</title>
        <authorList>
            <person name="Hayakawa Y."/>
            <person name="Jahagirdar A.P."/>
            <person name="Yaguchi M."/>
            <person name="Downer R.G.H."/>
        </authorList>
    </citation>
    <scope>PROTEIN SEQUENCE</scope>
    <source>
        <tissue>Hemolymph</tissue>
    </source>
</reference>
<feature type="chain" id="PRO_0000084271" description="Trehalase inhibitor">
    <location>
        <begin position="1"/>
        <end position="19" status="greater than"/>
    </location>
</feature>
<feature type="non-terminal residue">
    <location>
        <position position="19"/>
    </location>
</feature>
<name>ITHA_PERAM</name>
<dbReference type="PIR" id="A34233">
    <property type="entry name" value="A34233"/>
</dbReference>
<organism>
    <name type="scientific">Periplaneta americana</name>
    <name type="common">American cockroach</name>
    <name type="synonym">Blatta americana</name>
    <dbReference type="NCBI Taxonomy" id="6978"/>
    <lineage>
        <taxon>Eukaryota</taxon>
        <taxon>Metazoa</taxon>
        <taxon>Ecdysozoa</taxon>
        <taxon>Arthropoda</taxon>
        <taxon>Hexapoda</taxon>
        <taxon>Insecta</taxon>
        <taxon>Pterygota</taxon>
        <taxon>Neoptera</taxon>
        <taxon>Polyneoptera</taxon>
        <taxon>Dictyoptera</taxon>
        <taxon>Blattodea</taxon>
        <taxon>Blattoidea</taxon>
        <taxon>Blattidae</taxon>
        <taxon>Blattinae</taxon>
        <taxon>Periplaneta</taxon>
    </lineage>
</organism>
<sequence>AIPTPHVYKVXVPDGALND</sequence>
<protein>
    <recommendedName>
        <fullName>Trehalase inhibitor</fullName>
    </recommendedName>
</protein>
<comment type="function">
    <text>Under resting conditions, inhibits trehalase in a dose-dependent manner.</text>
</comment>
<proteinExistence type="evidence at protein level"/>